<sequence length="245" mass="27829">MTRMKYLVAAATLSLFLAGCSGSKEEVPDNPPNEIYATAQQKLQDGNWRQAITQLEALDNRYPFGPYSQQVQLDLIYAYYKNADLPLAQAAIDRFIRLNPTHPNIDYVMYMRGLTNMALDDSALQGFFGVDRSDRDPQHARAAFSDFSKLVRGYPNSQYTTDATKRLVFLKDRLAKYEYSVAEYYTERGAWVAVVNRVEGMLRDYPDTQATRDALPLMENAYRQMQMNAQAEKVAKIIAANSSNT</sequence>
<evidence type="ECO:0000255" key="1">
    <source>
        <dbReference type="HAMAP-Rule" id="MF_00922"/>
    </source>
</evidence>
<dbReference type="EMBL" id="AE005174">
    <property type="protein sequence ID" value="AAG57708.1"/>
    <property type="molecule type" value="Genomic_DNA"/>
</dbReference>
<dbReference type="EMBL" id="BA000007">
    <property type="protein sequence ID" value="BAB36881.1"/>
    <property type="molecule type" value="Genomic_DNA"/>
</dbReference>
<dbReference type="PIR" id="B91061">
    <property type="entry name" value="B91061"/>
</dbReference>
<dbReference type="PIR" id="H85905">
    <property type="entry name" value="H85905"/>
</dbReference>
<dbReference type="RefSeq" id="NP_311485.1">
    <property type="nucleotide sequence ID" value="NC_002695.1"/>
</dbReference>
<dbReference type="RefSeq" id="WP_000197686.1">
    <property type="nucleotide sequence ID" value="NZ_VOAI01000040.1"/>
</dbReference>
<dbReference type="EMDB" id="EMD-10247"/>
<dbReference type="EMDB" id="EMD-10248"/>
<dbReference type="EMDB" id="EMD-10249"/>
<dbReference type="EMDB" id="EMD-10250"/>
<dbReference type="EMDB" id="EMD-10251"/>
<dbReference type="EMDB" id="EMD-10252"/>
<dbReference type="EMDB" id="EMD-10253"/>
<dbReference type="EMDB" id="EMD-10254"/>
<dbReference type="EMDB" id="EMD-10255"/>
<dbReference type="EMDB" id="EMD-10268"/>
<dbReference type="EMDB" id="EMD-10269"/>
<dbReference type="EMDB" id="EMD-10270"/>
<dbReference type="EMDB" id="EMD-10271"/>
<dbReference type="EMDB" id="EMD-10272"/>
<dbReference type="EMDB" id="EMD-10274"/>
<dbReference type="EMDB" id="EMD-10275"/>
<dbReference type="EMDB" id="EMD-10276"/>
<dbReference type="SMR" id="P0AC04"/>
<dbReference type="IntAct" id="P0AC04">
    <property type="interactions" value="1"/>
</dbReference>
<dbReference type="STRING" id="155864.Z3889"/>
<dbReference type="GeneID" id="914862"/>
<dbReference type="GeneID" id="93774491"/>
<dbReference type="KEGG" id="ece:Z3889"/>
<dbReference type="KEGG" id="ecs:ECs_3458"/>
<dbReference type="PATRIC" id="fig|386585.9.peg.3614"/>
<dbReference type="eggNOG" id="COG4105">
    <property type="taxonomic scope" value="Bacteria"/>
</dbReference>
<dbReference type="HOGENOM" id="CLU_065982_0_2_6"/>
<dbReference type="OMA" id="ERQHPYS"/>
<dbReference type="Proteomes" id="UP000000558">
    <property type="component" value="Chromosome"/>
</dbReference>
<dbReference type="Proteomes" id="UP000002519">
    <property type="component" value="Chromosome"/>
</dbReference>
<dbReference type="GO" id="GO:1990063">
    <property type="term" value="C:Bam protein complex"/>
    <property type="evidence" value="ECO:0007669"/>
    <property type="project" value="TreeGrafter"/>
</dbReference>
<dbReference type="GO" id="GO:0043165">
    <property type="term" value="P:Gram-negative-bacterium-type cell outer membrane assembly"/>
    <property type="evidence" value="ECO:0007669"/>
    <property type="project" value="UniProtKB-UniRule"/>
</dbReference>
<dbReference type="GO" id="GO:0051205">
    <property type="term" value="P:protein insertion into membrane"/>
    <property type="evidence" value="ECO:0007669"/>
    <property type="project" value="UniProtKB-UniRule"/>
</dbReference>
<dbReference type="CDD" id="cd15830">
    <property type="entry name" value="BamD"/>
    <property type="match status" value="1"/>
</dbReference>
<dbReference type="FunFam" id="1.25.40.10:FF:000015">
    <property type="entry name" value="Outer membrane protein assembly factor BamD"/>
    <property type="match status" value="1"/>
</dbReference>
<dbReference type="Gene3D" id="1.25.40.10">
    <property type="entry name" value="Tetratricopeptide repeat domain"/>
    <property type="match status" value="1"/>
</dbReference>
<dbReference type="HAMAP" id="MF_00922">
    <property type="entry name" value="OM_assembly_BamD"/>
    <property type="match status" value="1"/>
</dbReference>
<dbReference type="InterPro" id="IPR017689">
    <property type="entry name" value="BamD"/>
</dbReference>
<dbReference type="InterPro" id="IPR039565">
    <property type="entry name" value="BamD-like"/>
</dbReference>
<dbReference type="InterPro" id="IPR011990">
    <property type="entry name" value="TPR-like_helical_dom_sf"/>
</dbReference>
<dbReference type="NCBIfam" id="TIGR03302">
    <property type="entry name" value="OM_YfiO"/>
    <property type="match status" value="1"/>
</dbReference>
<dbReference type="NCBIfam" id="NF008119">
    <property type="entry name" value="PRK10866.1"/>
    <property type="match status" value="1"/>
</dbReference>
<dbReference type="PANTHER" id="PTHR37423:SF1">
    <property type="entry name" value="OUTER MEMBRANE PROTEIN ASSEMBLY FACTOR BAMD"/>
    <property type="match status" value="1"/>
</dbReference>
<dbReference type="PANTHER" id="PTHR37423">
    <property type="entry name" value="SOLUBLE LYTIC MUREIN TRANSGLYCOSYLASE-RELATED"/>
    <property type="match status" value="1"/>
</dbReference>
<dbReference type="Pfam" id="PF13525">
    <property type="entry name" value="YfiO"/>
    <property type="match status" value="1"/>
</dbReference>
<dbReference type="SUPFAM" id="SSF48452">
    <property type="entry name" value="TPR-like"/>
    <property type="match status" value="1"/>
</dbReference>
<dbReference type="PROSITE" id="PS51257">
    <property type="entry name" value="PROKAR_LIPOPROTEIN"/>
    <property type="match status" value="1"/>
</dbReference>
<name>BAMD_ECO57</name>
<reference key="1">
    <citation type="journal article" date="2001" name="Nature">
        <title>Genome sequence of enterohaemorrhagic Escherichia coli O157:H7.</title>
        <authorList>
            <person name="Perna N.T."/>
            <person name="Plunkett G. III"/>
            <person name="Burland V."/>
            <person name="Mau B."/>
            <person name="Glasner J.D."/>
            <person name="Rose D.J."/>
            <person name="Mayhew G.F."/>
            <person name="Evans P.S."/>
            <person name="Gregor J."/>
            <person name="Kirkpatrick H.A."/>
            <person name="Posfai G."/>
            <person name="Hackett J."/>
            <person name="Klink S."/>
            <person name="Boutin A."/>
            <person name="Shao Y."/>
            <person name="Miller L."/>
            <person name="Grotbeck E.J."/>
            <person name="Davis N.W."/>
            <person name="Lim A."/>
            <person name="Dimalanta E.T."/>
            <person name="Potamousis K."/>
            <person name="Apodaca J."/>
            <person name="Anantharaman T.S."/>
            <person name="Lin J."/>
            <person name="Yen G."/>
            <person name="Schwartz D.C."/>
            <person name="Welch R.A."/>
            <person name="Blattner F.R."/>
        </authorList>
    </citation>
    <scope>NUCLEOTIDE SEQUENCE [LARGE SCALE GENOMIC DNA]</scope>
    <source>
        <strain>O157:H7 / EDL933 / ATCC 700927 / EHEC</strain>
    </source>
</reference>
<reference key="2">
    <citation type="journal article" date="2001" name="DNA Res.">
        <title>Complete genome sequence of enterohemorrhagic Escherichia coli O157:H7 and genomic comparison with a laboratory strain K-12.</title>
        <authorList>
            <person name="Hayashi T."/>
            <person name="Makino K."/>
            <person name="Ohnishi M."/>
            <person name="Kurokawa K."/>
            <person name="Ishii K."/>
            <person name="Yokoyama K."/>
            <person name="Han C.-G."/>
            <person name="Ohtsubo E."/>
            <person name="Nakayama K."/>
            <person name="Murata T."/>
            <person name="Tanaka M."/>
            <person name="Tobe T."/>
            <person name="Iida T."/>
            <person name="Takami H."/>
            <person name="Honda T."/>
            <person name="Sasakawa C."/>
            <person name="Ogasawara N."/>
            <person name="Yasunaga T."/>
            <person name="Kuhara S."/>
            <person name="Shiba T."/>
            <person name="Hattori M."/>
            <person name="Shinagawa H."/>
        </authorList>
    </citation>
    <scope>NUCLEOTIDE SEQUENCE [LARGE SCALE GENOMIC DNA]</scope>
    <source>
        <strain>O157:H7 / Sakai / RIMD 0509952 / EHEC</strain>
    </source>
</reference>
<organism>
    <name type="scientific">Escherichia coli O157:H7</name>
    <dbReference type="NCBI Taxonomy" id="83334"/>
    <lineage>
        <taxon>Bacteria</taxon>
        <taxon>Pseudomonadati</taxon>
        <taxon>Pseudomonadota</taxon>
        <taxon>Gammaproteobacteria</taxon>
        <taxon>Enterobacterales</taxon>
        <taxon>Enterobacteriaceae</taxon>
        <taxon>Escherichia</taxon>
    </lineage>
</organism>
<feature type="signal peptide" evidence="1">
    <location>
        <begin position="1"/>
        <end position="19"/>
    </location>
</feature>
<feature type="chain" id="PRO_0000042806" description="Outer membrane protein assembly factor BamD">
    <location>
        <begin position="20"/>
        <end position="245"/>
    </location>
</feature>
<feature type="lipid moiety-binding region" description="N-palmitoyl cysteine" evidence="1">
    <location>
        <position position="20"/>
    </location>
</feature>
<feature type="lipid moiety-binding region" description="S-diacylglycerol cysteine" evidence="1">
    <location>
        <position position="20"/>
    </location>
</feature>
<protein>
    <recommendedName>
        <fullName evidence="1">Outer membrane protein assembly factor BamD</fullName>
    </recommendedName>
</protein>
<gene>
    <name evidence="1" type="primary">bamD</name>
    <name type="synonym">yfiO</name>
    <name type="ordered locus">Z3889</name>
    <name type="ordered locus">ECs3458</name>
</gene>
<accession>P0AC04</accession>
<accession>P77146</accession>
<accession>Q47344</accession>
<comment type="function">
    <text evidence="1">Part of the outer membrane protein assembly complex, which is involved in assembly and insertion of beta-barrel proteins into the outer membrane. Constitutes, with BamA, the core component of the assembly machinery.</text>
</comment>
<comment type="subunit">
    <text evidence="1">Part of the Bam complex, which is composed of the outer membrane protein BamA, and four lipoproteins BamB, BamC, BamD and BamE.</text>
</comment>
<comment type="subcellular location">
    <subcellularLocation>
        <location evidence="1">Cell outer membrane</location>
        <topology evidence="1">Lipid-anchor</topology>
    </subcellularLocation>
</comment>
<comment type="similarity">
    <text evidence="1">Belongs to the BamD family.</text>
</comment>
<proteinExistence type="inferred from homology"/>
<keyword id="KW-0998">Cell outer membrane</keyword>
<keyword id="KW-0449">Lipoprotein</keyword>
<keyword id="KW-0472">Membrane</keyword>
<keyword id="KW-0564">Palmitate</keyword>
<keyword id="KW-1185">Reference proteome</keyword>
<keyword id="KW-0732">Signal</keyword>